<proteinExistence type="inferred from homology"/>
<comment type="catalytic activity">
    <reaction>
        <text>a 1-acyl-sn-glycero-3-phosphocholine + H2O = sn-glycerol 3-phosphocholine + a fatty acid + H(+)</text>
        <dbReference type="Rhea" id="RHEA:15177"/>
        <dbReference type="ChEBI" id="CHEBI:15377"/>
        <dbReference type="ChEBI" id="CHEBI:15378"/>
        <dbReference type="ChEBI" id="CHEBI:16870"/>
        <dbReference type="ChEBI" id="CHEBI:28868"/>
        <dbReference type="ChEBI" id="CHEBI:58168"/>
        <dbReference type="EC" id="3.1.1.5"/>
    </reaction>
</comment>
<comment type="subcellular location">
    <subcellularLocation>
        <location evidence="1">Cell inner membrane</location>
    </subcellularLocation>
</comment>
<keyword id="KW-0997">Cell inner membrane</keyword>
<keyword id="KW-1003">Cell membrane</keyword>
<keyword id="KW-0378">Hydrolase</keyword>
<keyword id="KW-0444">Lipid biosynthesis</keyword>
<keyword id="KW-0443">Lipid metabolism</keyword>
<keyword id="KW-0472">Membrane</keyword>
<keyword id="KW-1185">Reference proteome</keyword>
<reference key="1">
    <citation type="journal article" date="2002" name="Proc. Natl. Acad. Sci. U.S.A.">
        <title>Extensive mosaic structure revealed by the complete genome sequence of uropathogenic Escherichia coli.</title>
        <authorList>
            <person name="Welch R.A."/>
            <person name="Burland V."/>
            <person name="Plunkett G. III"/>
            <person name="Redford P."/>
            <person name="Roesch P."/>
            <person name="Rasko D."/>
            <person name="Buckles E.L."/>
            <person name="Liou S.-R."/>
            <person name="Boutin A."/>
            <person name="Hackett J."/>
            <person name="Stroud D."/>
            <person name="Mayhew G.F."/>
            <person name="Rose D.J."/>
            <person name="Zhou S."/>
            <person name="Schwartz D.C."/>
            <person name="Perna N.T."/>
            <person name="Mobley H.L.T."/>
            <person name="Donnenberg M.S."/>
            <person name="Blattner F.R."/>
        </authorList>
    </citation>
    <scope>NUCLEOTIDE SEQUENCE [LARGE SCALE GENOMIC DNA]</scope>
    <source>
        <strain>CFT073 / ATCC 700928 / UPEC</strain>
    </source>
</reference>
<evidence type="ECO:0000250" key="1"/>
<organism>
    <name type="scientific">Escherichia coli O6:H1 (strain CFT073 / ATCC 700928 / UPEC)</name>
    <dbReference type="NCBI Taxonomy" id="199310"/>
    <lineage>
        <taxon>Bacteria</taxon>
        <taxon>Pseudomonadati</taxon>
        <taxon>Pseudomonadota</taxon>
        <taxon>Gammaproteobacteria</taxon>
        <taxon>Enterobacterales</taxon>
        <taxon>Enterobacteriaceae</taxon>
        <taxon>Escherichia</taxon>
    </lineage>
</organism>
<name>PLDB_ECOL6</name>
<accession>P59588</accession>
<sequence length="340" mass="38978">MFQQQKDWETRENAFAAFTMGPLTDFWRQRDEAEFTGVDDIPVRFVRFRAQHHDRVVVICPGRIESYVKYAELAYDLFHLGFDVLIIDHRGQGRSGRLLADPHLGHVNRFNDYVDDLAAFWQQEVQPGPWRKRYILAHSMGGAISTLFLQRHPGVCDAIALTAPMFGIVIRMPSFMARQILNWAEAHPRFRDGYAIGTGRWRALPFAINVLTHSRQRYRRNLRFYADDPTIRVGGPTYHWVRESILAGEQVLAGAGDDATPTLLLQAEEERVVDNRMHDRFCELRTAAGHPVEGGRPLVIKGAYHEILFEKDAMRSVALHAIVDFFNRHNSPSGNRSTEV</sequence>
<dbReference type="EC" id="3.1.1.5"/>
<dbReference type="EMBL" id="AE014075">
    <property type="protein sequence ID" value="AAN83180.1"/>
    <property type="molecule type" value="Genomic_DNA"/>
</dbReference>
<dbReference type="RefSeq" id="WP_000487654.1">
    <property type="nucleotide sequence ID" value="NZ_CP051263.1"/>
</dbReference>
<dbReference type="SMR" id="P59588"/>
<dbReference type="STRING" id="199310.c4747"/>
<dbReference type="ESTHER" id="ecoli-pldb">
    <property type="family name" value="Monoglyceridelipase_lysophospholip"/>
</dbReference>
<dbReference type="GeneID" id="93778112"/>
<dbReference type="KEGG" id="ecc:c4747"/>
<dbReference type="eggNOG" id="COG2267">
    <property type="taxonomic scope" value="Bacteria"/>
</dbReference>
<dbReference type="HOGENOM" id="CLU_026209_10_1_6"/>
<dbReference type="BioCyc" id="ECOL199310:C4747-MONOMER"/>
<dbReference type="Proteomes" id="UP000001410">
    <property type="component" value="Chromosome"/>
</dbReference>
<dbReference type="GO" id="GO:0005886">
    <property type="term" value="C:plasma membrane"/>
    <property type="evidence" value="ECO:0007669"/>
    <property type="project" value="UniProtKB-SubCell"/>
</dbReference>
<dbReference type="GO" id="GO:0004622">
    <property type="term" value="F:lysophospholipase activity"/>
    <property type="evidence" value="ECO:0007669"/>
    <property type="project" value="UniProtKB-EC"/>
</dbReference>
<dbReference type="GO" id="GO:0006629">
    <property type="term" value="P:lipid metabolic process"/>
    <property type="evidence" value="ECO:0007669"/>
    <property type="project" value="UniProtKB-KW"/>
</dbReference>
<dbReference type="FunFam" id="3.40.50.1820:FF:000020">
    <property type="entry name" value="Lysophospholipase L2"/>
    <property type="match status" value="1"/>
</dbReference>
<dbReference type="Gene3D" id="3.40.50.1820">
    <property type="entry name" value="alpha/beta hydrolase"/>
    <property type="match status" value="1"/>
</dbReference>
<dbReference type="InterPro" id="IPR029058">
    <property type="entry name" value="AB_hydrolase_fold"/>
</dbReference>
<dbReference type="InterPro" id="IPR022742">
    <property type="entry name" value="Hydrolase_4"/>
</dbReference>
<dbReference type="InterPro" id="IPR051044">
    <property type="entry name" value="MAG_DAG_Lipase"/>
</dbReference>
<dbReference type="NCBIfam" id="NF008019">
    <property type="entry name" value="PRK10749.1"/>
    <property type="match status" value="1"/>
</dbReference>
<dbReference type="PANTHER" id="PTHR11614">
    <property type="entry name" value="PHOSPHOLIPASE-RELATED"/>
    <property type="match status" value="1"/>
</dbReference>
<dbReference type="Pfam" id="PF12146">
    <property type="entry name" value="Hydrolase_4"/>
    <property type="match status" value="1"/>
</dbReference>
<dbReference type="SUPFAM" id="SSF53474">
    <property type="entry name" value="alpha/beta-Hydrolases"/>
    <property type="match status" value="1"/>
</dbReference>
<feature type="chain" id="PRO_0000058455" description="Lysophospholipase L2">
    <location>
        <begin position="1"/>
        <end position="340"/>
    </location>
</feature>
<gene>
    <name type="primary">pldB</name>
    <name type="ordered locus">c4747</name>
</gene>
<protein>
    <recommendedName>
        <fullName>Lysophospholipase L2</fullName>
        <ecNumber>3.1.1.5</ecNumber>
    </recommendedName>
    <alternativeName>
        <fullName>Lecithinase B</fullName>
    </alternativeName>
</protein>